<dbReference type="EC" id="4.6.1.18"/>
<dbReference type="EMBL" id="AJ315456">
    <property type="protein sequence ID" value="CAC86437.1"/>
    <property type="molecule type" value="Genomic_DNA"/>
</dbReference>
<dbReference type="SMR" id="Q8VD91"/>
<dbReference type="GO" id="GO:0005576">
    <property type="term" value="C:extracellular region"/>
    <property type="evidence" value="ECO:0007669"/>
    <property type="project" value="UniProtKB-SubCell"/>
</dbReference>
<dbReference type="GO" id="GO:0016829">
    <property type="term" value="F:lyase activity"/>
    <property type="evidence" value="ECO:0007669"/>
    <property type="project" value="UniProtKB-KW"/>
</dbReference>
<dbReference type="GO" id="GO:0003676">
    <property type="term" value="F:nucleic acid binding"/>
    <property type="evidence" value="ECO:0007669"/>
    <property type="project" value="InterPro"/>
</dbReference>
<dbReference type="GO" id="GO:0004522">
    <property type="term" value="F:ribonuclease A activity"/>
    <property type="evidence" value="ECO:0007669"/>
    <property type="project" value="UniProtKB-EC"/>
</dbReference>
<dbReference type="GO" id="GO:0050830">
    <property type="term" value="P:defense response to Gram-positive bacterium"/>
    <property type="evidence" value="ECO:0007669"/>
    <property type="project" value="TreeGrafter"/>
</dbReference>
<dbReference type="CDD" id="cd06265">
    <property type="entry name" value="RNase_A_canonical"/>
    <property type="match status" value="1"/>
</dbReference>
<dbReference type="FunFam" id="3.10.130.10:FF:000001">
    <property type="entry name" value="Ribonuclease pancreatic"/>
    <property type="match status" value="1"/>
</dbReference>
<dbReference type="Gene3D" id="3.10.130.10">
    <property type="entry name" value="Ribonuclease A-like domain"/>
    <property type="match status" value="1"/>
</dbReference>
<dbReference type="InterPro" id="IPR001427">
    <property type="entry name" value="RNaseA"/>
</dbReference>
<dbReference type="InterPro" id="IPR036816">
    <property type="entry name" value="RNaseA-like_dom_sf"/>
</dbReference>
<dbReference type="InterPro" id="IPR023411">
    <property type="entry name" value="RNaseA_AS"/>
</dbReference>
<dbReference type="InterPro" id="IPR023412">
    <property type="entry name" value="RNaseA_domain"/>
</dbReference>
<dbReference type="PANTHER" id="PTHR11437">
    <property type="entry name" value="RIBONUCLEASE"/>
    <property type="match status" value="1"/>
</dbReference>
<dbReference type="PANTHER" id="PTHR11437:SF24">
    <property type="entry name" value="RIBONUCLEASE PANCREATIC"/>
    <property type="match status" value="1"/>
</dbReference>
<dbReference type="Pfam" id="PF00074">
    <property type="entry name" value="RnaseA"/>
    <property type="match status" value="1"/>
</dbReference>
<dbReference type="PRINTS" id="PR00794">
    <property type="entry name" value="RIBONUCLEASE"/>
</dbReference>
<dbReference type="SMART" id="SM00092">
    <property type="entry name" value="RNAse_Pc"/>
    <property type="match status" value="1"/>
</dbReference>
<dbReference type="SUPFAM" id="SSF54076">
    <property type="entry name" value="RNase A-like"/>
    <property type="match status" value="1"/>
</dbReference>
<dbReference type="PROSITE" id="PS00127">
    <property type="entry name" value="RNASE_PANCREATIC"/>
    <property type="match status" value="1"/>
</dbReference>
<sequence>MGLEKSFILFSLLVLVLGWVQPSLGRESSADKFKRQHMDTEGSSKSSPTYCNQMMKRRDMTNGSCKPVNTFVHEPLEDVQAICSQGQVTCKNGKSNCYKSSSTLHITDCRLKGSSKYPNCDYTTTDSQKQLIIACDGNPYVPVHLDDSV</sequence>
<keyword id="KW-1015">Disulfide bond</keyword>
<keyword id="KW-0255">Endonuclease</keyword>
<keyword id="KW-0378">Hydrolase</keyword>
<keyword id="KW-0456">Lyase</keyword>
<keyword id="KW-0540">Nuclease</keyword>
<keyword id="KW-0964">Secreted</keyword>
<keyword id="KW-0732">Signal</keyword>
<name>RNS1A_RATFU</name>
<evidence type="ECO:0000250" key="1"/>
<evidence type="ECO:0000305" key="2"/>
<organism>
    <name type="scientific">Rattus fuscipes</name>
    <name type="common">Bush rat</name>
    <dbReference type="NCBI Taxonomy" id="10119"/>
    <lineage>
        <taxon>Eukaryota</taxon>
        <taxon>Metazoa</taxon>
        <taxon>Chordata</taxon>
        <taxon>Craniata</taxon>
        <taxon>Vertebrata</taxon>
        <taxon>Euteleostomi</taxon>
        <taxon>Mammalia</taxon>
        <taxon>Eutheria</taxon>
        <taxon>Euarchontoglires</taxon>
        <taxon>Glires</taxon>
        <taxon>Rodentia</taxon>
        <taxon>Myomorpha</taxon>
        <taxon>Muroidea</taxon>
        <taxon>Muridae</taxon>
        <taxon>Murinae</taxon>
        <taxon>Rattus</taxon>
    </lineage>
</organism>
<reference key="1">
    <citation type="journal article" date="2002" name="J. Mol. Evol.">
        <title>Pancreatic-type ribonuclease 1 gene duplications in rat species.</title>
        <authorList>
            <person name="Dubois J.-Y.F."/>
            <person name="Jekel P.A."/>
            <person name="Mulder P.P.M.F.A."/>
            <person name="Bussink A.P."/>
            <person name="Catzeflis F.M."/>
            <person name="Carsana A."/>
            <person name="Beintema J.J."/>
        </authorList>
    </citation>
    <scope>NUCLEOTIDE SEQUENCE [GENOMIC DNA]</scope>
</reference>
<accession>Q8VD91</accession>
<comment type="function">
    <text evidence="1">Endonuclease that catalyzes the cleavage of RNA on the 3' side of pyrimidine nucleotides. Acts on single-stranded and double-stranded RNA (By similarity).</text>
</comment>
<comment type="catalytic activity">
    <reaction>
        <text>an [RNA] containing cytidine + H2O = an [RNA]-3'-cytidine-3'-phosphate + a 5'-hydroxy-ribonucleotide-3'-[RNA].</text>
        <dbReference type="EC" id="4.6.1.18"/>
    </reaction>
</comment>
<comment type="catalytic activity">
    <reaction>
        <text>an [RNA] containing uridine + H2O = an [RNA]-3'-uridine-3'-phosphate + a 5'-hydroxy-ribonucleotide-3'-[RNA].</text>
        <dbReference type="EC" id="4.6.1.18"/>
    </reaction>
</comment>
<comment type="subunit">
    <text evidence="1">Monomer.</text>
</comment>
<comment type="subcellular location">
    <subcellularLocation>
        <location evidence="1">Secreted</location>
    </subcellularLocation>
</comment>
<comment type="similarity">
    <text evidence="2">Belongs to the pancreatic ribonuclease family.</text>
</comment>
<protein>
    <recommendedName>
        <fullName>Ribonuclease pancreatic alpha-type</fullName>
        <ecNumber>4.6.1.18</ecNumber>
    </recommendedName>
    <alternativeName>
        <fullName>RNase 1 gamma</fullName>
    </alternativeName>
</protein>
<proteinExistence type="inferred from homology"/>
<feature type="signal peptide" evidence="1">
    <location>
        <begin position="1"/>
        <end position="25"/>
    </location>
</feature>
<feature type="chain" id="PRO_0000234938" description="Ribonuclease pancreatic alpha-type">
    <location>
        <begin position="26"/>
        <end position="149"/>
    </location>
</feature>
<feature type="active site" description="Proton acceptor" evidence="1">
    <location>
        <position position="37"/>
    </location>
</feature>
<feature type="active site" description="Proton donor" evidence="1">
    <location>
        <position position="144"/>
    </location>
</feature>
<feature type="binding site" evidence="1">
    <location>
        <position position="32"/>
    </location>
    <ligand>
        <name>substrate</name>
    </ligand>
</feature>
<feature type="binding site" evidence="1">
    <location>
        <position position="35"/>
    </location>
    <ligand>
        <name>substrate</name>
    </ligand>
</feature>
<feature type="binding site" evidence="1">
    <location>
        <begin position="66"/>
        <end position="70"/>
    </location>
    <ligand>
        <name>substrate</name>
    </ligand>
</feature>
<feature type="binding site" evidence="1">
    <location>
        <position position="91"/>
    </location>
    <ligand>
        <name>substrate</name>
    </ligand>
</feature>
<feature type="binding site" evidence="1">
    <location>
        <position position="110"/>
    </location>
    <ligand>
        <name>substrate</name>
    </ligand>
</feature>
<feature type="disulfide bond" evidence="1">
    <location>
        <begin position="51"/>
        <end position="109"/>
    </location>
</feature>
<feature type="disulfide bond" evidence="1">
    <location>
        <begin position="65"/>
        <end position="120"/>
    </location>
</feature>
<feature type="disulfide bond" evidence="1">
    <location>
        <begin position="83"/>
        <end position="135"/>
    </location>
</feature>
<feature type="disulfide bond" evidence="1">
    <location>
        <begin position="90"/>
        <end position="97"/>
    </location>
</feature>